<sequence>MTVLNARERKDQKAHQTKELRNQGHVPGVLYGKKVKSTPVSVEAVAFLKTFRDVGQNGLFDLQLENGGKHHVMVQEVQIDPLNNQYMHVDFFEVDMNEERDVNVPVHLEGDAPGAKEGGIVNHLLYEITVHCLPADIPESITVDISNLNIGDSLSVSDIRANVPVTIVNEDDETVVTVTPPTVTEDPDATEEDNTTAESVEATGERNDDNLDRPGRVE</sequence>
<keyword id="KW-1185">Reference proteome</keyword>
<keyword id="KW-0687">Ribonucleoprotein</keyword>
<keyword id="KW-0689">Ribosomal protein</keyword>
<keyword id="KW-0694">RNA-binding</keyword>
<keyword id="KW-0699">rRNA-binding</keyword>
<proteinExistence type="inferred from homology"/>
<comment type="function">
    <text evidence="1">This is one of the proteins that binds to the 5S RNA in the ribosome where it forms part of the central protuberance.</text>
</comment>
<comment type="subunit">
    <text evidence="1">Part of the 50S ribosomal subunit; part of the 5S rRNA/L5/L18/L25 subcomplex. Contacts the 5S rRNA. Binds to the 5S rRNA independently of L5 and L18.</text>
</comment>
<comment type="similarity">
    <text evidence="1">Belongs to the bacterial ribosomal protein bL25 family. CTC subfamily.</text>
</comment>
<dbReference type="EMBL" id="AP006627">
    <property type="protein sequence ID" value="BAD62623.1"/>
    <property type="molecule type" value="Genomic_DNA"/>
</dbReference>
<dbReference type="RefSeq" id="WP_011244944.1">
    <property type="nucleotide sequence ID" value="NC_006582.1"/>
</dbReference>
<dbReference type="SMR" id="Q5WAD7"/>
<dbReference type="STRING" id="66692.ABC0080"/>
<dbReference type="KEGG" id="bcl:ABC0080"/>
<dbReference type="eggNOG" id="COG1825">
    <property type="taxonomic scope" value="Bacteria"/>
</dbReference>
<dbReference type="HOGENOM" id="CLU_075939_2_1_9"/>
<dbReference type="OrthoDB" id="9790002at2"/>
<dbReference type="Proteomes" id="UP000001168">
    <property type="component" value="Chromosome"/>
</dbReference>
<dbReference type="GO" id="GO:0022625">
    <property type="term" value="C:cytosolic large ribosomal subunit"/>
    <property type="evidence" value="ECO:0007669"/>
    <property type="project" value="TreeGrafter"/>
</dbReference>
<dbReference type="GO" id="GO:0008097">
    <property type="term" value="F:5S rRNA binding"/>
    <property type="evidence" value="ECO:0007669"/>
    <property type="project" value="InterPro"/>
</dbReference>
<dbReference type="GO" id="GO:0003735">
    <property type="term" value="F:structural constituent of ribosome"/>
    <property type="evidence" value="ECO:0007669"/>
    <property type="project" value="InterPro"/>
</dbReference>
<dbReference type="GO" id="GO:0006412">
    <property type="term" value="P:translation"/>
    <property type="evidence" value="ECO:0007669"/>
    <property type="project" value="UniProtKB-UniRule"/>
</dbReference>
<dbReference type="CDD" id="cd00495">
    <property type="entry name" value="Ribosomal_L25_TL5_CTC"/>
    <property type="match status" value="1"/>
</dbReference>
<dbReference type="Gene3D" id="2.170.120.20">
    <property type="entry name" value="Ribosomal protein L25, beta domain"/>
    <property type="match status" value="1"/>
</dbReference>
<dbReference type="Gene3D" id="2.40.240.10">
    <property type="entry name" value="Ribosomal Protein L25, Chain P"/>
    <property type="match status" value="1"/>
</dbReference>
<dbReference type="HAMAP" id="MF_01334">
    <property type="entry name" value="Ribosomal_bL25_CTC"/>
    <property type="match status" value="1"/>
</dbReference>
<dbReference type="InterPro" id="IPR020056">
    <property type="entry name" value="Rbsml_bL25/Gln-tRNA_synth_N"/>
</dbReference>
<dbReference type="InterPro" id="IPR011035">
    <property type="entry name" value="Ribosomal_bL25/Gln-tRNA_synth"/>
</dbReference>
<dbReference type="InterPro" id="IPR020057">
    <property type="entry name" value="Ribosomal_bL25_b-dom"/>
</dbReference>
<dbReference type="InterPro" id="IPR037121">
    <property type="entry name" value="Ribosomal_bL25_C"/>
</dbReference>
<dbReference type="InterPro" id="IPR001021">
    <property type="entry name" value="Ribosomal_bL25_long"/>
</dbReference>
<dbReference type="InterPro" id="IPR029751">
    <property type="entry name" value="Ribosomal_L25_dom"/>
</dbReference>
<dbReference type="InterPro" id="IPR020930">
    <property type="entry name" value="Ribosomal_uL5_bac-type"/>
</dbReference>
<dbReference type="NCBIfam" id="TIGR00731">
    <property type="entry name" value="bL25_bact_ctc"/>
    <property type="match status" value="1"/>
</dbReference>
<dbReference type="NCBIfam" id="NF004133">
    <property type="entry name" value="PRK05618.2-4"/>
    <property type="match status" value="1"/>
</dbReference>
<dbReference type="PANTHER" id="PTHR33284">
    <property type="entry name" value="RIBOSOMAL PROTEIN L25/GLN-TRNA SYNTHETASE, ANTI-CODON-BINDING DOMAIN-CONTAINING PROTEIN"/>
    <property type="match status" value="1"/>
</dbReference>
<dbReference type="PANTHER" id="PTHR33284:SF1">
    <property type="entry name" value="RIBOSOMAL PROTEIN L25_GLN-TRNA SYNTHETASE, ANTI-CODON-BINDING DOMAIN-CONTAINING PROTEIN"/>
    <property type="match status" value="1"/>
</dbReference>
<dbReference type="Pfam" id="PF01386">
    <property type="entry name" value="Ribosomal_L25p"/>
    <property type="match status" value="1"/>
</dbReference>
<dbReference type="Pfam" id="PF14693">
    <property type="entry name" value="Ribosomal_TL5_C"/>
    <property type="match status" value="1"/>
</dbReference>
<dbReference type="SUPFAM" id="SSF50715">
    <property type="entry name" value="Ribosomal protein L25-like"/>
    <property type="match status" value="1"/>
</dbReference>
<name>RL25_SHOC1</name>
<protein>
    <recommendedName>
        <fullName evidence="1">Large ribosomal subunit protein bL25</fullName>
    </recommendedName>
    <alternativeName>
        <fullName evidence="3">50S ribosomal protein L25</fullName>
    </alternativeName>
    <alternativeName>
        <fullName evidence="1">General stress protein CTC</fullName>
    </alternativeName>
</protein>
<feature type="chain" id="PRO_0000181511" description="Large ribosomal subunit protein bL25">
    <location>
        <begin position="1"/>
        <end position="218"/>
    </location>
</feature>
<feature type="region of interest" description="Disordered" evidence="2">
    <location>
        <begin position="178"/>
        <end position="218"/>
    </location>
</feature>
<feature type="compositionally biased region" description="Acidic residues" evidence="2">
    <location>
        <begin position="185"/>
        <end position="195"/>
    </location>
</feature>
<feature type="compositionally biased region" description="Basic and acidic residues" evidence="2">
    <location>
        <begin position="203"/>
        <end position="218"/>
    </location>
</feature>
<reference key="1">
    <citation type="submission" date="2003-10" db="EMBL/GenBank/DDBJ databases">
        <title>The complete genome sequence of the alkaliphilic Bacillus clausii KSM-K16.</title>
        <authorList>
            <person name="Takaki Y."/>
            <person name="Kageyama Y."/>
            <person name="Shimamura S."/>
            <person name="Suzuki H."/>
            <person name="Nishi S."/>
            <person name="Hatada Y."/>
            <person name="Kawai S."/>
            <person name="Ito S."/>
            <person name="Horikoshi K."/>
        </authorList>
    </citation>
    <scope>NUCLEOTIDE SEQUENCE [LARGE SCALE GENOMIC DNA]</scope>
    <source>
        <strain>KSM-K16</strain>
    </source>
</reference>
<accession>Q5WAD7</accession>
<gene>
    <name evidence="1" type="primary">rplY</name>
    <name evidence="1" type="synonym">ctc</name>
    <name type="ordered locus">ABC0080</name>
</gene>
<evidence type="ECO:0000255" key="1">
    <source>
        <dbReference type="HAMAP-Rule" id="MF_01334"/>
    </source>
</evidence>
<evidence type="ECO:0000256" key="2">
    <source>
        <dbReference type="SAM" id="MobiDB-lite"/>
    </source>
</evidence>
<evidence type="ECO:0000305" key="3"/>
<organism>
    <name type="scientific">Shouchella clausii (strain KSM-K16)</name>
    <name type="common">Alkalihalobacillus clausii</name>
    <dbReference type="NCBI Taxonomy" id="66692"/>
    <lineage>
        <taxon>Bacteria</taxon>
        <taxon>Bacillati</taxon>
        <taxon>Bacillota</taxon>
        <taxon>Bacilli</taxon>
        <taxon>Bacillales</taxon>
        <taxon>Bacillaceae</taxon>
        <taxon>Shouchella</taxon>
    </lineage>
</organism>